<proteinExistence type="evidence at transcript level"/>
<sequence>MPSAGERPAVKMGPAPAGEQHRRATEDPEVMELAFEGMDKEKAPSRKRARTEPPAEGLLQPVNLSREELYKEPTNEELNRLRETEILFHSTLLRLQVEELLKEVRLSEKKKERIDNFLKEVTKRIQKVPPVPEAELTDQSWLPAGVRVPLHQVPYAVKGSFRFRPPSQITVVGSYLLDTCMRPDINVDVAVTMPREILQDKDGLNQRYFRKRALYLAHLAYHLAQDPLFSSVRFSYMSGCHLKPSLLLRPHGKDERLVTVRLLPCPPLDFFRPCRLLPTKNNVRSAWYRGQSCPDYEPPTPHYNTWILQDVALETHMHLLASVLGSAQGLKDGVALLKVWLRQRELDKGLGGFNGFIISMLVAFLVSKRKIHTTMSGYQVLRSVLQFLATTDLTINGISFSLSSDPSLPTLAEFHQLFAVVFVDPSGRLNLCADVTASTYNQVQYEAELSMALLDSKADDGFQLLLMTPKPMIQAFDHVVHLHPLSRLQASCHQLKLWPELQDNGGDYVSAALGPLTNILVQGLGCRLHLLAHSRPPVPEWSINQDPPKHKDAGTLTLGFLFRPEGLTSVIDLGPEADKPEAADFRQFWGTRSELRRFQDGAIREAVVWEAESLFEKRLIPHQVVTHLLALHADIPDTCIQYVGGFLDALIQNPKEISSTGEEALALAVRCYDDLSRLLWGLEGLPLTVSAVQGAHPVLRYTEVFPPAPVRPAYSFYNRLQELASLLPRPDKPCPAYVEPMTVVCHLEGSGQWPQDAEAVQRVRAAFQLRLAEVLTQEHRLQCCATATHTDVLKDGFVFRIRVAYQREPQILKEVRSPEGMVSLRDTPASLRLERDTKLLPLLTSALHGLQQQYPAYSGVARLAKRWVRAQLLGEGFTDESLDLLAASLFLHPEPFTPPSVPQVGFLRFLYLVSTFDWKNNPLIVNLNGELTAEEQVGIRSSFLAARTQLPVMVIITPQDRRSSVWTQDGPSAQILQQLVSLAAEALPILEKQLMDPRGPGDIRTVFRPPFDMYDVLIHLTPRHIPRHRQAVDPPVASFCRGLLAEPGPSSLMPVLGYDPPQLYLAQLREAFEDLALFFYDQHGGEVIGVLWKPSSFQPQPFKASSIKGRMVVSQGGELVMLPNIEAILEDFAVLGEGLVQAVEARSERWTV</sequence>
<reference key="1">
    <citation type="journal article" date="2002" name="Genes Cells">
        <title>Isolation and characterization of a new nucleolar protein, Nrap, that is conserved from yeast to humans.</title>
        <authorList>
            <person name="Utama B."/>
            <person name="Kennedy D."/>
            <person name="Ru K."/>
            <person name="Mattick J.S."/>
        </authorList>
    </citation>
    <scope>NUCLEOTIDE SEQUENCE [MRNA] (ISOFORMS 1 AND 2)</scope>
    <scope>SUBCELLULAR LOCATION</scope>
    <scope>TISSUE SPECIFICITY</scope>
</reference>
<reference key="2">
    <citation type="journal article" date="2005" name="Science">
        <title>The transcriptional landscape of the mammalian genome.</title>
        <authorList>
            <person name="Carninci P."/>
            <person name="Kasukawa T."/>
            <person name="Katayama S."/>
            <person name="Gough J."/>
            <person name="Frith M.C."/>
            <person name="Maeda N."/>
            <person name="Oyama R."/>
            <person name="Ravasi T."/>
            <person name="Lenhard B."/>
            <person name="Wells C."/>
            <person name="Kodzius R."/>
            <person name="Shimokawa K."/>
            <person name="Bajic V.B."/>
            <person name="Brenner S.E."/>
            <person name="Batalov S."/>
            <person name="Forrest A.R."/>
            <person name="Zavolan M."/>
            <person name="Davis M.J."/>
            <person name="Wilming L.G."/>
            <person name="Aidinis V."/>
            <person name="Allen J.E."/>
            <person name="Ambesi-Impiombato A."/>
            <person name="Apweiler R."/>
            <person name="Aturaliya R.N."/>
            <person name="Bailey T.L."/>
            <person name="Bansal M."/>
            <person name="Baxter L."/>
            <person name="Beisel K.W."/>
            <person name="Bersano T."/>
            <person name="Bono H."/>
            <person name="Chalk A.M."/>
            <person name="Chiu K.P."/>
            <person name="Choudhary V."/>
            <person name="Christoffels A."/>
            <person name="Clutterbuck D.R."/>
            <person name="Crowe M.L."/>
            <person name="Dalla E."/>
            <person name="Dalrymple B.P."/>
            <person name="de Bono B."/>
            <person name="Della Gatta G."/>
            <person name="di Bernardo D."/>
            <person name="Down T."/>
            <person name="Engstrom P."/>
            <person name="Fagiolini M."/>
            <person name="Faulkner G."/>
            <person name="Fletcher C.F."/>
            <person name="Fukushima T."/>
            <person name="Furuno M."/>
            <person name="Futaki S."/>
            <person name="Gariboldi M."/>
            <person name="Georgii-Hemming P."/>
            <person name="Gingeras T.R."/>
            <person name="Gojobori T."/>
            <person name="Green R.E."/>
            <person name="Gustincich S."/>
            <person name="Harbers M."/>
            <person name="Hayashi Y."/>
            <person name="Hensch T.K."/>
            <person name="Hirokawa N."/>
            <person name="Hill D."/>
            <person name="Huminiecki L."/>
            <person name="Iacono M."/>
            <person name="Ikeo K."/>
            <person name="Iwama A."/>
            <person name="Ishikawa T."/>
            <person name="Jakt M."/>
            <person name="Kanapin A."/>
            <person name="Katoh M."/>
            <person name="Kawasawa Y."/>
            <person name="Kelso J."/>
            <person name="Kitamura H."/>
            <person name="Kitano H."/>
            <person name="Kollias G."/>
            <person name="Krishnan S.P."/>
            <person name="Kruger A."/>
            <person name="Kummerfeld S.K."/>
            <person name="Kurochkin I.V."/>
            <person name="Lareau L.F."/>
            <person name="Lazarevic D."/>
            <person name="Lipovich L."/>
            <person name="Liu J."/>
            <person name="Liuni S."/>
            <person name="McWilliam S."/>
            <person name="Madan Babu M."/>
            <person name="Madera M."/>
            <person name="Marchionni L."/>
            <person name="Matsuda H."/>
            <person name="Matsuzawa S."/>
            <person name="Miki H."/>
            <person name="Mignone F."/>
            <person name="Miyake S."/>
            <person name="Morris K."/>
            <person name="Mottagui-Tabar S."/>
            <person name="Mulder N."/>
            <person name="Nakano N."/>
            <person name="Nakauchi H."/>
            <person name="Ng P."/>
            <person name="Nilsson R."/>
            <person name="Nishiguchi S."/>
            <person name="Nishikawa S."/>
            <person name="Nori F."/>
            <person name="Ohara O."/>
            <person name="Okazaki Y."/>
            <person name="Orlando V."/>
            <person name="Pang K.C."/>
            <person name="Pavan W.J."/>
            <person name="Pavesi G."/>
            <person name="Pesole G."/>
            <person name="Petrovsky N."/>
            <person name="Piazza S."/>
            <person name="Reed J."/>
            <person name="Reid J.F."/>
            <person name="Ring B.Z."/>
            <person name="Ringwald M."/>
            <person name="Rost B."/>
            <person name="Ruan Y."/>
            <person name="Salzberg S.L."/>
            <person name="Sandelin A."/>
            <person name="Schneider C."/>
            <person name="Schoenbach C."/>
            <person name="Sekiguchi K."/>
            <person name="Semple C.A."/>
            <person name="Seno S."/>
            <person name="Sessa L."/>
            <person name="Sheng Y."/>
            <person name="Shibata Y."/>
            <person name="Shimada H."/>
            <person name="Shimada K."/>
            <person name="Silva D."/>
            <person name="Sinclair B."/>
            <person name="Sperling S."/>
            <person name="Stupka E."/>
            <person name="Sugiura K."/>
            <person name="Sultana R."/>
            <person name="Takenaka Y."/>
            <person name="Taki K."/>
            <person name="Tammoja K."/>
            <person name="Tan S.L."/>
            <person name="Tang S."/>
            <person name="Taylor M.S."/>
            <person name="Tegner J."/>
            <person name="Teichmann S.A."/>
            <person name="Ueda H.R."/>
            <person name="van Nimwegen E."/>
            <person name="Verardo R."/>
            <person name="Wei C.L."/>
            <person name="Yagi K."/>
            <person name="Yamanishi H."/>
            <person name="Zabarovsky E."/>
            <person name="Zhu S."/>
            <person name="Zimmer A."/>
            <person name="Hide W."/>
            <person name="Bult C."/>
            <person name="Grimmond S.M."/>
            <person name="Teasdale R.D."/>
            <person name="Liu E.T."/>
            <person name="Brusic V."/>
            <person name="Quackenbush J."/>
            <person name="Wahlestedt C."/>
            <person name="Mattick J.S."/>
            <person name="Hume D.A."/>
            <person name="Kai C."/>
            <person name="Sasaki D."/>
            <person name="Tomaru Y."/>
            <person name="Fukuda S."/>
            <person name="Kanamori-Katayama M."/>
            <person name="Suzuki M."/>
            <person name="Aoki J."/>
            <person name="Arakawa T."/>
            <person name="Iida J."/>
            <person name="Imamura K."/>
            <person name="Itoh M."/>
            <person name="Kato T."/>
            <person name="Kawaji H."/>
            <person name="Kawagashira N."/>
            <person name="Kawashima T."/>
            <person name="Kojima M."/>
            <person name="Kondo S."/>
            <person name="Konno H."/>
            <person name="Nakano K."/>
            <person name="Ninomiya N."/>
            <person name="Nishio T."/>
            <person name="Okada M."/>
            <person name="Plessy C."/>
            <person name="Shibata K."/>
            <person name="Shiraki T."/>
            <person name="Suzuki S."/>
            <person name="Tagami M."/>
            <person name="Waki K."/>
            <person name="Watahiki A."/>
            <person name="Okamura-Oho Y."/>
            <person name="Suzuki H."/>
            <person name="Kawai J."/>
            <person name="Hayashizaki Y."/>
        </authorList>
    </citation>
    <scope>NUCLEOTIDE SEQUENCE [LARGE SCALE MRNA] (ISOFORM 1)</scope>
    <source>
        <strain>C57BL/6J</strain>
        <tissue>Dendritic cell</tissue>
        <tissue>Embryo</tissue>
        <tissue>Lung</tissue>
    </source>
</reference>
<reference key="3">
    <citation type="journal article" date="2009" name="PLoS Biol.">
        <title>Lineage-specific biology revealed by a finished genome assembly of the mouse.</title>
        <authorList>
            <person name="Church D.M."/>
            <person name="Goodstadt L."/>
            <person name="Hillier L.W."/>
            <person name="Zody M.C."/>
            <person name="Goldstein S."/>
            <person name="She X."/>
            <person name="Bult C.J."/>
            <person name="Agarwala R."/>
            <person name="Cherry J.L."/>
            <person name="DiCuccio M."/>
            <person name="Hlavina W."/>
            <person name="Kapustin Y."/>
            <person name="Meric P."/>
            <person name="Maglott D."/>
            <person name="Birtle Z."/>
            <person name="Marques A.C."/>
            <person name="Graves T."/>
            <person name="Zhou S."/>
            <person name="Teague B."/>
            <person name="Potamousis K."/>
            <person name="Churas C."/>
            <person name="Place M."/>
            <person name="Herschleb J."/>
            <person name="Runnheim R."/>
            <person name="Forrest D."/>
            <person name="Amos-Landgraf J."/>
            <person name="Schwartz D.C."/>
            <person name="Cheng Z."/>
            <person name="Lindblad-Toh K."/>
            <person name="Eichler E.E."/>
            <person name="Ponting C.P."/>
        </authorList>
    </citation>
    <scope>NUCLEOTIDE SEQUENCE [LARGE SCALE GENOMIC DNA]</scope>
    <source>
        <strain>C57BL/6J</strain>
    </source>
</reference>
<reference key="4">
    <citation type="journal article" date="2004" name="Genome Res.">
        <title>The status, quality, and expansion of the NIH full-length cDNA project: the Mammalian Gene Collection (MGC).</title>
        <authorList>
            <consortium name="The MGC Project Team"/>
        </authorList>
    </citation>
    <scope>NUCLEOTIDE SEQUENCE [LARGE SCALE MRNA] (ISOFORM 1)</scope>
    <source>
        <strain>C57BL/6J</strain>
        <strain>FVB/N</strain>
        <tissue>Brain</tissue>
        <tissue>Liver</tissue>
        <tissue>Mammary tumor</tissue>
    </source>
</reference>
<dbReference type="EMBL" id="AF361077">
    <property type="protein sequence ID" value="AAL74401.1"/>
    <property type="status" value="ALT_INIT"/>
    <property type="molecule type" value="mRNA"/>
</dbReference>
<dbReference type="EMBL" id="AF361078">
    <property type="protein sequence ID" value="AAL74402.1"/>
    <property type="status" value="ALT_INIT"/>
    <property type="molecule type" value="mRNA"/>
</dbReference>
<dbReference type="EMBL" id="AK053117">
    <property type="protein sequence ID" value="BAC35271.1"/>
    <property type="molecule type" value="mRNA"/>
</dbReference>
<dbReference type="EMBL" id="AK155818">
    <property type="protein sequence ID" value="BAE33447.1"/>
    <property type="molecule type" value="mRNA"/>
</dbReference>
<dbReference type="EMBL" id="AK166650">
    <property type="protein sequence ID" value="BAE38917.1"/>
    <property type="molecule type" value="mRNA"/>
</dbReference>
<dbReference type="EMBL" id="AL954379">
    <property type="status" value="NOT_ANNOTATED_CDS"/>
    <property type="molecule type" value="Genomic_DNA"/>
</dbReference>
<dbReference type="EMBL" id="BC019981">
    <property type="protein sequence ID" value="AAH19981.1"/>
    <property type="status" value="ALT_INIT"/>
    <property type="molecule type" value="mRNA"/>
</dbReference>
<dbReference type="EMBL" id="BC021856">
    <property type="protein sequence ID" value="AAH21856.1"/>
    <property type="status" value="ALT_INIT"/>
    <property type="molecule type" value="mRNA"/>
</dbReference>
<dbReference type="EMBL" id="BC059820">
    <property type="protein sequence ID" value="AAH59820.2"/>
    <property type="molecule type" value="mRNA"/>
</dbReference>
<dbReference type="CCDS" id="CCDS38715.1">
    <molecule id="Q8R5K4-1"/>
</dbReference>
<dbReference type="RefSeq" id="NP_631982.2">
    <molecule id="Q8R5K4-1"/>
    <property type="nucleotide sequence ID" value="NM_139236.4"/>
</dbReference>
<dbReference type="SMR" id="Q8R5K4"/>
<dbReference type="BioGRID" id="230928">
    <property type="interactions" value="4"/>
</dbReference>
<dbReference type="FunCoup" id="Q8R5K4">
    <property type="interactions" value="3145"/>
</dbReference>
<dbReference type="IntAct" id="Q8R5K4">
    <property type="interactions" value="1"/>
</dbReference>
<dbReference type="STRING" id="10090.ENSMUSP00000030138"/>
<dbReference type="iPTMnet" id="Q8R5K4"/>
<dbReference type="PhosphoSitePlus" id="Q8R5K4"/>
<dbReference type="PaxDb" id="10090-ENSMUSP00000030138"/>
<dbReference type="PeptideAtlas" id="Q8R5K4"/>
<dbReference type="ProteomicsDB" id="293873">
    <molecule id="Q8R5K4-1"/>
</dbReference>
<dbReference type="ProteomicsDB" id="293874">
    <molecule id="Q8R5K4-2"/>
</dbReference>
<dbReference type="Pumba" id="Q8R5K4"/>
<dbReference type="Antibodypedia" id="25265">
    <property type="antibodies" value="119 antibodies from 22 providers"/>
</dbReference>
<dbReference type="DNASU" id="230082"/>
<dbReference type="Ensembl" id="ENSMUST00000030138.9">
    <molecule id="Q8R5K4-1"/>
    <property type="protein sequence ID" value="ENSMUSP00000030138.9"/>
    <property type="gene ID" value="ENSMUSG00000028430.15"/>
</dbReference>
<dbReference type="GeneID" id="230082"/>
<dbReference type="KEGG" id="mmu:230082"/>
<dbReference type="UCSC" id="uc008sii.1">
    <molecule id="Q8R5K4-1"/>
    <property type="organism name" value="mouse"/>
</dbReference>
<dbReference type="AGR" id="MGI:2140151"/>
<dbReference type="CTD" id="65083"/>
<dbReference type="MGI" id="MGI:2140151">
    <property type="gene designation" value="Nol6"/>
</dbReference>
<dbReference type="VEuPathDB" id="HostDB:ENSMUSG00000028430"/>
<dbReference type="eggNOG" id="KOG2054">
    <property type="taxonomic scope" value="Eukaryota"/>
</dbReference>
<dbReference type="GeneTree" id="ENSGT00390000018619"/>
<dbReference type="HOGENOM" id="CLU_003502_0_1_1"/>
<dbReference type="InParanoid" id="Q8R5K4"/>
<dbReference type="OMA" id="NPHGGKE"/>
<dbReference type="OrthoDB" id="10251401at2759"/>
<dbReference type="PhylomeDB" id="Q8R5K4"/>
<dbReference type="Reactome" id="R-MMU-6791226">
    <property type="pathway name" value="Major pathway of rRNA processing in the nucleolus and cytosol"/>
</dbReference>
<dbReference type="BioGRID-ORCS" id="230082">
    <property type="hits" value="27 hits in 79 CRISPR screens"/>
</dbReference>
<dbReference type="ChiTaRS" id="Nol6">
    <property type="organism name" value="mouse"/>
</dbReference>
<dbReference type="PRO" id="PR:Q8R5K4"/>
<dbReference type="Proteomes" id="UP000000589">
    <property type="component" value="Chromosome 4"/>
</dbReference>
<dbReference type="RNAct" id="Q8R5K4">
    <property type="molecule type" value="protein"/>
</dbReference>
<dbReference type="Bgee" id="ENSMUSG00000028430">
    <property type="expression patterns" value="Expressed in primary visual cortex and 219 other cell types or tissues"/>
</dbReference>
<dbReference type="GO" id="GO:0000794">
    <property type="term" value="C:condensed nuclear chromosome"/>
    <property type="evidence" value="ECO:0000314"/>
    <property type="project" value="UniProtKB"/>
</dbReference>
<dbReference type="GO" id="GO:0005739">
    <property type="term" value="C:mitochondrion"/>
    <property type="evidence" value="ECO:0007669"/>
    <property type="project" value="Ensembl"/>
</dbReference>
<dbReference type="GO" id="GO:0005730">
    <property type="term" value="C:nucleolus"/>
    <property type="evidence" value="ECO:0000314"/>
    <property type="project" value="MGI"/>
</dbReference>
<dbReference type="GO" id="GO:0005654">
    <property type="term" value="C:nucleoplasm"/>
    <property type="evidence" value="ECO:0007669"/>
    <property type="project" value="Ensembl"/>
</dbReference>
<dbReference type="GO" id="GO:0032040">
    <property type="term" value="C:small-subunit processome"/>
    <property type="evidence" value="ECO:0000250"/>
    <property type="project" value="UniProtKB"/>
</dbReference>
<dbReference type="GO" id="GO:0003723">
    <property type="term" value="F:RNA binding"/>
    <property type="evidence" value="ECO:0007669"/>
    <property type="project" value="UniProtKB-KW"/>
</dbReference>
<dbReference type="GO" id="GO:0042274">
    <property type="term" value="P:ribosomal small subunit biogenesis"/>
    <property type="evidence" value="ECO:0000250"/>
    <property type="project" value="UniProtKB"/>
</dbReference>
<dbReference type="FunFam" id="1.10.1410.10:FF:000005">
    <property type="entry name" value="Nucleolar protein 6"/>
    <property type="match status" value="1"/>
</dbReference>
<dbReference type="FunFam" id="1.10.1410.10:FF:000006">
    <property type="entry name" value="Nucleolar protein 6"/>
    <property type="match status" value="1"/>
</dbReference>
<dbReference type="FunFam" id="3.30.70.3030:FF:000001">
    <property type="entry name" value="Nucleolar protein 6"/>
    <property type="match status" value="1"/>
</dbReference>
<dbReference type="Gene3D" id="1.10.1410.10">
    <property type="match status" value="2"/>
</dbReference>
<dbReference type="Gene3D" id="3.30.70.3030">
    <property type="match status" value="1"/>
</dbReference>
<dbReference type="InterPro" id="IPR005554">
    <property type="entry name" value="NOL6/Upt22"/>
</dbReference>
<dbReference type="InterPro" id="IPR035082">
    <property type="entry name" value="Nrap_D1"/>
</dbReference>
<dbReference type="InterPro" id="IPR035367">
    <property type="entry name" value="Nrap_D2"/>
</dbReference>
<dbReference type="InterPro" id="IPR035368">
    <property type="entry name" value="Nrap_D3"/>
</dbReference>
<dbReference type="InterPro" id="IPR035369">
    <property type="entry name" value="Nrap_D4"/>
</dbReference>
<dbReference type="InterPro" id="IPR035370">
    <property type="entry name" value="Nrap_D5"/>
</dbReference>
<dbReference type="InterPro" id="IPR035371">
    <property type="entry name" value="Nrap_D6"/>
</dbReference>
<dbReference type="PANTHER" id="PTHR17972:SF0">
    <property type="entry name" value="NUCLEOLAR PROTEIN 6"/>
    <property type="match status" value="1"/>
</dbReference>
<dbReference type="PANTHER" id="PTHR17972">
    <property type="entry name" value="NUCLEOLAR RNA-ASSOCIATED PROTEIN"/>
    <property type="match status" value="1"/>
</dbReference>
<dbReference type="Pfam" id="PF03813">
    <property type="entry name" value="Nrap"/>
    <property type="match status" value="1"/>
</dbReference>
<dbReference type="Pfam" id="PF17403">
    <property type="entry name" value="Nrap_D2"/>
    <property type="match status" value="1"/>
</dbReference>
<dbReference type="Pfam" id="PF17404">
    <property type="entry name" value="Nrap_D3"/>
    <property type="match status" value="1"/>
</dbReference>
<dbReference type="Pfam" id="PF17405">
    <property type="entry name" value="Nrap_D4"/>
    <property type="match status" value="1"/>
</dbReference>
<dbReference type="Pfam" id="PF17406">
    <property type="entry name" value="Nrap_D5"/>
    <property type="match status" value="1"/>
</dbReference>
<dbReference type="Pfam" id="PF17407">
    <property type="entry name" value="Nrap_D6"/>
    <property type="match status" value="1"/>
</dbReference>
<keyword id="KW-0025">Alternative splicing</keyword>
<keyword id="KW-0158">Chromosome</keyword>
<keyword id="KW-0175">Coiled coil</keyword>
<keyword id="KW-0539">Nucleus</keyword>
<keyword id="KW-0597">Phosphoprotein</keyword>
<keyword id="KW-1185">Reference proteome</keyword>
<keyword id="KW-0694">RNA-binding</keyword>
<evidence type="ECO:0000250" key="1">
    <source>
        <dbReference type="UniProtKB" id="Q9H6R4"/>
    </source>
</evidence>
<evidence type="ECO:0000255" key="2"/>
<evidence type="ECO:0000256" key="3">
    <source>
        <dbReference type="SAM" id="MobiDB-lite"/>
    </source>
</evidence>
<evidence type="ECO:0000269" key="4">
    <source>
    </source>
</evidence>
<evidence type="ECO:0000303" key="5">
    <source>
    </source>
</evidence>
<evidence type="ECO:0000305" key="6"/>
<protein>
    <recommendedName>
        <fullName>Nucleolar protein 6</fullName>
    </recommendedName>
    <alternativeName>
        <fullName>Nucleolar RNA-associated protein</fullName>
        <shortName>Nrap</shortName>
    </alternativeName>
</protein>
<accession>Q8R5K4</accession>
<accession>Q3TL75</accession>
<accession>Q3U1P8</accession>
<accession>Q6PAN8</accession>
<accession>Q8C6V4</accession>
<accession>Q8R5K3</accession>
<accession>Q8VCG0</accession>
<accession>Q8WTY7</accession>
<gene>
    <name type="primary">Nol6</name>
</gene>
<name>NOL6_MOUSE</name>
<feature type="chain" id="PRO_0000215648" description="Nucleolar protein 6">
    <location>
        <begin position="1"/>
        <end position="1152"/>
    </location>
</feature>
<feature type="region of interest" description="Disordered" evidence="3">
    <location>
        <begin position="1"/>
        <end position="30"/>
    </location>
</feature>
<feature type="region of interest" description="Disordered" evidence="3">
    <location>
        <begin position="36"/>
        <end position="55"/>
    </location>
</feature>
<feature type="coiled-coil region" evidence="2">
    <location>
        <begin position="92"/>
        <end position="128"/>
    </location>
</feature>
<feature type="modified residue" description="Phosphoserine" evidence="1">
    <location>
        <position position="65"/>
    </location>
</feature>
<feature type="modified residue" description="Phosphoserine" evidence="1">
    <location>
        <position position="292"/>
    </location>
</feature>
<feature type="modified residue" description="Phosphoserine" evidence="1">
    <location>
        <position position="817"/>
    </location>
</feature>
<feature type="splice variant" id="VSP_013533" description="In isoform 2." evidence="5">
    <original>QLYL</original>
    <variation>LSLL</variation>
    <location>
        <begin position="1062"/>
        <end position="1065"/>
    </location>
</feature>
<feature type="splice variant" id="VSP_013534" description="In isoform 2." evidence="5">
    <location>
        <begin position="1066"/>
        <end position="1152"/>
    </location>
</feature>
<feature type="sequence conflict" description="In Ref. 2; BAE38917." evidence="6" ref="2">
    <original>D</original>
    <variation>V</variation>
    <location>
        <position position="254"/>
    </location>
</feature>
<feature type="sequence conflict" description="In Ref. 2; BAE38917." evidence="6" ref="2">
    <original>P</original>
    <variation>L</variation>
    <location>
        <position position="740"/>
    </location>
</feature>
<feature type="sequence conflict" description="In Ref. 2; BAE38917." evidence="6" ref="2">
    <original>V</original>
    <variation>M</variation>
    <location>
        <position position="815"/>
    </location>
</feature>
<feature type="sequence conflict" description="In Ref. 2; BAE38917." evidence="6" ref="2">
    <original>V</original>
    <variation>I</variation>
    <location>
        <position position="1055"/>
    </location>
</feature>
<organism>
    <name type="scientific">Mus musculus</name>
    <name type="common">Mouse</name>
    <dbReference type="NCBI Taxonomy" id="10090"/>
    <lineage>
        <taxon>Eukaryota</taxon>
        <taxon>Metazoa</taxon>
        <taxon>Chordata</taxon>
        <taxon>Craniata</taxon>
        <taxon>Vertebrata</taxon>
        <taxon>Euteleostomi</taxon>
        <taxon>Mammalia</taxon>
        <taxon>Eutheria</taxon>
        <taxon>Euarchontoglires</taxon>
        <taxon>Glires</taxon>
        <taxon>Rodentia</taxon>
        <taxon>Myomorpha</taxon>
        <taxon>Muroidea</taxon>
        <taxon>Muridae</taxon>
        <taxon>Murinae</taxon>
        <taxon>Mus</taxon>
        <taxon>Mus</taxon>
    </lineage>
</organism>
<comment type="function">
    <text evidence="1">Part of the small subunit (SSU) processome, first precursor of the small eukaryotic ribosomal subunit. During the assembly of the SSU processome in the nucleolus, many ribosome biogenesis factors, an RNA chaperone and ribosomal proteins associate with the nascent pre-rRNA and work in concert to generate RNA folding, modifications, rearrangements and cleavage as well as targeted degradation of pre-ribosomal RNA by the RNA exosome.</text>
</comment>
<comment type="subunit">
    <text evidence="1">Part of the small subunit (SSU) processome, composed of more than 70 proteins and the RNA chaperone small nucleolar RNA (snoRNA) U3. Interacts with RRP7A; required for NOL6 localization to nucleolus.</text>
</comment>
<comment type="subcellular location">
    <subcellularLocation>
        <location evidence="4">Nucleus</location>
        <location evidence="4">Nucleolus</location>
    </subcellularLocation>
    <subcellularLocation>
        <location evidence="4">Chromosome</location>
    </subcellularLocation>
    <text evidence="4">Localizes to condensed chromosomes in mitosis.</text>
</comment>
<comment type="alternative products">
    <event type="alternative splicing"/>
    <isoform>
        <id>Q8R5K4-1</id>
        <name>1</name>
        <name>Alpha</name>
        <name>Long</name>
        <sequence type="displayed"/>
    </isoform>
    <isoform>
        <id>Q8R5K4-2</id>
        <name>2</name>
        <name>Beta</name>
        <name>Short</name>
        <sequence type="described" ref="VSP_013533 VSP_013534"/>
    </isoform>
</comment>
<comment type="tissue specificity">
    <text evidence="4">Ubiquitously expressed.</text>
</comment>
<comment type="similarity">
    <text evidence="6">Belongs to the NRAP family.</text>
</comment>
<comment type="sequence caution" evidence="6">
    <conflict type="erroneous initiation">
        <sequence resource="EMBL-CDS" id="AAH19981"/>
    </conflict>
    <text>Truncated N-terminus.</text>
</comment>
<comment type="sequence caution" evidence="6">
    <conflict type="erroneous initiation">
        <sequence resource="EMBL-CDS" id="AAH21856"/>
    </conflict>
    <text>Truncated N-terminus.</text>
</comment>
<comment type="sequence caution" evidence="6">
    <conflict type="erroneous initiation">
        <sequence resource="EMBL-CDS" id="AAL74401"/>
    </conflict>
    <text>Truncated N-terminus.</text>
</comment>
<comment type="sequence caution" evidence="6">
    <conflict type="erroneous initiation">
        <sequence resource="EMBL-CDS" id="AAL74402"/>
    </conflict>
    <text>Truncated N-terminus.</text>
</comment>